<sequence>MIDFRPFYQQIATTNLSAWLETLPLQLKQWEKTTHGDYAKWAKIVDFMPNSTACINLKDKVESIPHTPLSVGETKQLTHHLKQLMPWRKGPYHLHGIHIDTEWRSDFKWDRVLPHLAPLKDRTILDVGCGSGYHMWRMVGEGAKMVVGIDPTELFLCQFEVVRKLLGNDRRANLIPLGIEQMQPLAAFDTVFSMGVLYHRKSPLDHLSQLKAQLVKGGELVLETLVIDGDVNTCLVPADRYAKMKNVYFIPSIDCLINWLEKVGFKNVRCVDQAVTTLEEQRKTDWLENESLVDFLDPNDHSKTIEGYPAPKRAVILANA</sequence>
<organism>
    <name type="scientific">Actinobacillus pleuropneumoniae serotype 3 (strain JL03)</name>
    <dbReference type="NCBI Taxonomy" id="434271"/>
    <lineage>
        <taxon>Bacteria</taxon>
        <taxon>Pseudomonadati</taxon>
        <taxon>Pseudomonadota</taxon>
        <taxon>Gammaproteobacteria</taxon>
        <taxon>Pasteurellales</taxon>
        <taxon>Pasteurellaceae</taxon>
        <taxon>Actinobacillus</taxon>
    </lineage>
</organism>
<keyword id="KW-0808">Transferase</keyword>
<keyword id="KW-0819">tRNA processing</keyword>
<dbReference type="EC" id="2.5.1.-" evidence="1"/>
<dbReference type="EMBL" id="CP000687">
    <property type="protein sequence ID" value="ABY69380.1"/>
    <property type="molecule type" value="Genomic_DNA"/>
</dbReference>
<dbReference type="RefSeq" id="WP_005601096.1">
    <property type="nucleotide sequence ID" value="NC_010278.1"/>
</dbReference>
<dbReference type="SMR" id="B0BP95"/>
<dbReference type="KEGG" id="apj:APJL_0820"/>
<dbReference type="HOGENOM" id="CLU_052665_0_0_6"/>
<dbReference type="Proteomes" id="UP000008547">
    <property type="component" value="Chromosome"/>
</dbReference>
<dbReference type="GO" id="GO:0008168">
    <property type="term" value="F:methyltransferase activity"/>
    <property type="evidence" value="ECO:0007669"/>
    <property type="project" value="TreeGrafter"/>
</dbReference>
<dbReference type="GO" id="GO:0016765">
    <property type="term" value="F:transferase activity, transferring alkyl or aryl (other than methyl) groups"/>
    <property type="evidence" value="ECO:0007669"/>
    <property type="project" value="UniProtKB-UniRule"/>
</dbReference>
<dbReference type="GO" id="GO:0002098">
    <property type="term" value="P:tRNA wobble uridine modification"/>
    <property type="evidence" value="ECO:0007669"/>
    <property type="project" value="InterPro"/>
</dbReference>
<dbReference type="CDD" id="cd02440">
    <property type="entry name" value="AdoMet_MTases"/>
    <property type="match status" value="1"/>
</dbReference>
<dbReference type="Gene3D" id="3.40.50.150">
    <property type="entry name" value="Vaccinia Virus protein VP39"/>
    <property type="match status" value="1"/>
</dbReference>
<dbReference type="HAMAP" id="MF_01590">
    <property type="entry name" value="tRNA_carboxymethyltr_CmoB"/>
    <property type="match status" value="1"/>
</dbReference>
<dbReference type="InterPro" id="IPR010017">
    <property type="entry name" value="CmoB"/>
</dbReference>
<dbReference type="InterPro" id="IPR027555">
    <property type="entry name" value="Mo5U34_MeTrfas-like"/>
</dbReference>
<dbReference type="InterPro" id="IPR029063">
    <property type="entry name" value="SAM-dependent_MTases_sf"/>
</dbReference>
<dbReference type="NCBIfam" id="NF011650">
    <property type="entry name" value="PRK15068.1"/>
    <property type="match status" value="1"/>
</dbReference>
<dbReference type="NCBIfam" id="TIGR00452">
    <property type="entry name" value="tRNA 5-methoxyuridine(34)/uridine 5-oxyacetic acid(34) synthase CmoB"/>
    <property type="match status" value="1"/>
</dbReference>
<dbReference type="PANTHER" id="PTHR43464">
    <property type="entry name" value="METHYLTRANSFERASE"/>
    <property type="match status" value="1"/>
</dbReference>
<dbReference type="PANTHER" id="PTHR43464:SF95">
    <property type="entry name" value="TRNA U34 CARBOXYMETHYLTRANSFERASE"/>
    <property type="match status" value="1"/>
</dbReference>
<dbReference type="Pfam" id="PF08003">
    <property type="entry name" value="Methyltransf_9"/>
    <property type="match status" value="1"/>
</dbReference>
<dbReference type="SUPFAM" id="SSF53335">
    <property type="entry name" value="S-adenosyl-L-methionine-dependent methyltransferases"/>
    <property type="match status" value="1"/>
</dbReference>
<gene>
    <name evidence="1" type="primary">cmoB</name>
    <name type="ordered locus">APJL_0820</name>
</gene>
<reference key="1">
    <citation type="journal article" date="2008" name="PLoS ONE">
        <title>Genome biology of Actinobacillus pleuropneumoniae JL03, an isolate of serotype 3 prevalent in China.</title>
        <authorList>
            <person name="Xu Z."/>
            <person name="Zhou Y."/>
            <person name="Li L."/>
            <person name="Zhou R."/>
            <person name="Xiao S."/>
            <person name="Wan Y."/>
            <person name="Zhang S."/>
            <person name="Wang K."/>
            <person name="Li W."/>
            <person name="Li L."/>
            <person name="Jin H."/>
            <person name="Kang M."/>
            <person name="Dalai B."/>
            <person name="Li T."/>
            <person name="Liu L."/>
            <person name="Cheng Y."/>
            <person name="Zhang L."/>
            <person name="Xu T."/>
            <person name="Zheng H."/>
            <person name="Pu S."/>
            <person name="Wang B."/>
            <person name="Gu W."/>
            <person name="Zhang X.L."/>
            <person name="Zhu G.-F."/>
            <person name="Wang S."/>
            <person name="Zhao G.-P."/>
            <person name="Chen H."/>
        </authorList>
    </citation>
    <scope>NUCLEOTIDE SEQUENCE [LARGE SCALE GENOMIC DNA]</scope>
    <source>
        <strain>JL03</strain>
    </source>
</reference>
<evidence type="ECO:0000255" key="1">
    <source>
        <dbReference type="HAMAP-Rule" id="MF_01590"/>
    </source>
</evidence>
<protein>
    <recommendedName>
        <fullName evidence="1">tRNA U34 carboxymethyltransferase</fullName>
        <ecNumber evidence="1">2.5.1.-</ecNumber>
    </recommendedName>
</protein>
<feature type="chain" id="PRO_1000201285" description="tRNA U34 carboxymethyltransferase">
    <location>
        <begin position="1"/>
        <end position="320"/>
    </location>
</feature>
<feature type="binding site" evidence="1">
    <location>
        <position position="89"/>
    </location>
    <ligand>
        <name>carboxy-S-adenosyl-L-methionine</name>
        <dbReference type="ChEBI" id="CHEBI:134278"/>
    </ligand>
</feature>
<feature type="binding site" evidence="1">
    <location>
        <position position="103"/>
    </location>
    <ligand>
        <name>carboxy-S-adenosyl-L-methionine</name>
        <dbReference type="ChEBI" id="CHEBI:134278"/>
    </ligand>
</feature>
<feature type="binding site" evidence="1">
    <location>
        <position position="108"/>
    </location>
    <ligand>
        <name>carboxy-S-adenosyl-L-methionine</name>
        <dbReference type="ChEBI" id="CHEBI:134278"/>
    </ligand>
</feature>
<feature type="binding site" evidence="1">
    <location>
        <position position="128"/>
    </location>
    <ligand>
        <name>carboxy-S-adenosyl-L-methionine</name>
        <dbReference type="ChEBI" id="CHEBI:134278"/>
    </ligand>
</feature>
<feature type="binding site" evidence="1">
    <location>
        <begin position="150"/>
        <end position="152"/>
    </location>
    <ligand>
        <name>carboxy-S-adenosyl-L-methionine</name>
        <dbReference type="ChEBI" id="CHEBI:134278"/>
    </ligand>
</feature>
<feature type="binding site" evidence="1">
    <location>
        <begin position="179"/>
        <end position="180"/>
    </location>
    <ligand>
        <name>carboxy-S-adenosyl-L-methionine</name>
        <dbReference type="ChEBI" id="CHEBI:134278"/>
    </ligand>
</feature>
<feature type="binding site" evidence="1">
    <location>
        <position position="194"/>
    </location>
    <ligand>
        <name>carboxy-S-adenosyl-L-methionine</name>
        <dbReference type="ChEBI" id="CHEBI:134278"/>
    </ligand>
</feature>
<feature type="binding site" evidence="1">
    <location>
        <position position="198"/>
    </location>
    <ligand>
        <name>carboxy-S-adenosyl-L-methionine</name>
        <dbReference type="ChEBI" id="CHEBI:134278"/>
    </ligand>
</feature>
<feature type="binding site" evidence="1">
    <location>
        <position position="313"/>
    </location>
    <ligand>
        <name>carboxy-S-adenosyl-L-methionine</name>
        <dbReference type="ChEBI" id="CHEBI:134278"/>
    </ligand>
</feature>
<proteinExistence type="inferred from homology"/>
<accession>B0BP95</accession>
<name>CMOB_ACTPJ</name>
<comment type="function">
    <text evidence="1">Catalyzes carboxymethyl transfer from carboxy-S-adenosyl-L-methionine (Cx-SAM) to 5-hydroxyuridine (ho5U) to form 5-carboxymethoxyuridine (cmo5U) at position 34 in tRNAs.</text>
</comment>
<comment type="catalytic activity">
    <reaction evidence="1">
        <text>carboxy-S-adenosyl-L-methionine + 5-hydroxyuridine(34) in tRNA = 5-carboxymethoxyuridine(34) in tRNA + S-adenosyl-L-homocysteine + H(+)</text>
        <dbReference type="Rhea" id="RHEA:52848"/>
        <dbReference type="Rhea" id="RHEA-COMP:13381"/>
        <dbReference type="Rhea" id="RHEA-COMP:13383"/>
        <dbReference type="ChEBI" id="CHEBI:15378"/>
        <dbReference type="ChEBI" id="CHEBI:57856"/>
        <dbReference type="ChEBI" id="CHEBI:134278"/>
        <dbReference type="ChEBI" id="CHEBI:136877"/>
        <dbReference type="ChEBI" id="CHEBI:136879"/>
    </reaction>
</comment>
<comment type="subunit">
    <text evidence="1">Homotetramer.</text>
</comment>
<comment type="similarity">
    <text evidence="1">Belongs to the class I-like SAM-binding methyltransferase superfamily. CmoB family.</text>
</comment>